<sequence>MIFQRTVQKMVQTTGVGLHSGNKVTLRIMPAPVNSGIVLTRTDLSPAVSIPAKAELVRETTMCTALVNDAGIRISTIEHLFAALAGLGIDNAVIEVDAPEIPIMDGSASPFVFLLQSAGIKEQAAAKKYIKINKTIRVEDGDKWAELKPFKGFRVNFKIDFNHPEIARSQQHMVMDFSTSAFVKDISRARTFGFMRDIEYLRANNLALGGSMENAVVLDEYRVLNPDGLRYEDEFVKHKILDAFGDLYVAGHAIVGEFCAFKTGHALNNQLVRALLVQQDAWELVSFDKEADVPVSFMVPGTQAFA</sequence>
<reference key="1">
    <citation type="submission" date="2006-03" db="EMBL/GenBank/DDBJ databases">
        <title>Complete sequence of Shewanella denitrificans OS217.</title>
        <authorList>
            <consortium name="US DOE Joint Genome Institute"/>
            <person name="Copeland A."/>
            <person name="Lucas S."/>
            <person name="Lapidus A."/>
            <person name="Barry K."/>
            <person name="Detter J.C."/>
            <person name="Glavina del Rio T."/>
            <person name="Hammon N."/>
            <person name="Israni S."/>
            <person name="Dalin E."/>
            <person name="Tice H."/>
            <person name="Pitluck S."/>
            <person name="Brettin T."/>
            <person name="Bruce D."/>
            <person name="Han C."/>
            <person name="Tapia R."/>
            <person name="Gilna P."/>
            <person name="Kiss H."/>
            <person name="Schmutz J."/>
            <person name="Larimer F."/>
            <person name="Land M."/>
            <person name="Hauser L."/>
            <person name="Kyrpides N."/>
            <person name="Lykidis A."/>
            <person name="Richardson P."/>
        </authorList>
    </citation>
    <scope>NUCLEOTIDE SEQUENCE [LARGE SCALE GENOMIC DNA]</scope>
    <source>
        <strain>OS217 / ATCC BAA-1090 / DSM 15013</strain>
    </source>
</reference>
<accession>Q12SC1</accession>
<protein>
    <recommendedName>
        <fullName evidence="1">UDP-3-O-acyl-N-acetylglucosamine deacetylase</fullName>
        <shortName evidence="1">UDP-3-O-acyl-GlcNAc deacetylase</shortName>
        <ecNumber evidence="1">3.5.1.108</ecNumber>
    </recommendedName>
    <alternativeName>
        <fullName evidence="1">UDP-3-O-[R-3-hydroxymyristoyl]-N-acetylglucosamine deacetylase</fullName>
    </alternativeName>
</protein>
<name>LPXC_SHEDO</name>
<proteinExistence type="inferred from homology"/>
<gene>
    <name evidence="1" type="primary">lpxC</name>
    <name type="ordered locus">Sden_0360</name>
</gene>
<evidence type="ECO:0000255" key="1">
    <source>
        <dbReference type="HAMAP-Rule" id="MF_00388"/>
    </source>
</evidence>
<feature type="chain" id="PRO_1000013228" description="UDP-3-O-acyl-N-acetylglucosamine deacetylase">
    <location>
        <begin position="1"/>
        <end position="306"/>
    </location>
</feature>
<feature type="active site" description="Proton donor" evidence="1">
    <location>
        <position position="265"/>
    </location>
</feature>
<feature type="binding site" evidence="1">
    <location>
        <position position="79"/>
    </location>
    <ligand>
        <name>Zn(2+)</name>
        <dbReference type="ChEBI" id="CHEBI:29105"/>
    </ligand>
</feature>
<feature type="binding site" evidence="1">
    <location>
        <position position="238"/>
    </location>
    <ligand>
        <name>Zn(2+)</name>
        <dbReference type="ChEBI" id="CHEBI:29105"/>
    </ligand>
</feature>
<feature type="binding site" evidence="1">
    <location>
        <position position="242"/>
    </location>
    <ligand>
        <name>Zn(2+)</name>
        <dbReference type="ChEBI" id="CHEBI:29105"/>
    </ligand>
</feature>
<keyword id="KW-0378">Hydrolase</keyword>
<keyword id="KW-0441">Lipid A biosynthesis</keyword>
<keyword id="KW-0444">Lipid biosynthesis</keyword>
<keyword id="KW-0443">Lipid metabolism</keyword>
<keyword id="KW-0479">Metal-binding</keyword>
<keyword id="KW-1185">Reference proteome</keyword>
<keyword id="KW-0862">Zinc</keyword>
<dbReference type="EC" id="3.5.1.108" evidence="1"/>
<dbReference type="EMBL" id="CP000302">
    <property type="protein sequence ID" value="ABE53655.1"/>
    <property type="molecule type" value="Genomic_DNA"/>
</dbReference>
<dbReference type="RefSeq" id="WP_011494822.1">
    <property type="nucleotide sequence ID" value="NC_007954.1"/>
</dbReference>
<dbReference type="SMR" id="Q12SC1"/>
<dbReference type="STRING" id="318161.Sden_0360"/>
<dbReference type="KEGG" id="sdn:Sden_0360"/>
<dbReference type="eggNOG" id="COG0774">
    <property type="taxonomic scope" value="Bacteria"/>
</dbReference>
<dbReference type="HOGENOM" id="CLU_046528_1_0_6"/>
<dbReference type="OrthoDB" id="9802746at2"/>
<dbReference type="UniPathway" id="UPA00359">
    <property type="reaction ID" value="UER00478"/>
</dbReference>
<dbReference type="Proteomes" id="UP000001982">
    <property type="component" value="Chromosome"/>
</dbReference>
<dbReference type="GO" id="GO:0016020">
    <property type="term" value="C:membrane"/>
    <property type="evidence" value="ECO:0007669"/>
    <property type="project" value="GOC"/>
</dbReference>
<dbReference type="GO" id="GO:0046872">
    <property type="term" value="F:metal ion binding"/>
    <property type="evidence" value="ECO:0007669"/>
    <property type="project" value="UniProtKB-KW"/>
</dbReference>
<dbReference type="GO" id="GO:0103117">
    <property type="term" value="F:UDP-3-O-acyl-N-acetylglucosamine deacetylase activity"/>
    <property type="evidence" value="ECO:0007669"/>
    <property type="project" value="UniProtKB-UniRule"/>
</dbReference>
<dbReference type="GO" id="GO:0009245">
    <property type="term" value="P:lipid A biosynthetic process"/>
    <property type="evidence" value="ECO:0007669"/>
    <property type="project" value="UniProtKB-UniRule"/>
</dbReference>
<dbReference type="Gene3D" id="3.30.230.20">
    <property type="entry name" value="lpxc deacetylase, domain 1"/>
    <property type="match status" value="1"/>
</dbReference>
<dbReference type="Gene3D" id="3.30.1700.10">
    <property type="entry name" value="lpxc deacetylase, domain 2"/>
    <property type="match status" value="1"/>
</dbReference>
<dbReference type="HAMAP" id="MF_00388">
    <property type="entry name" value="LpxC"/>
    <property type="match status" value="1"/>
</dbReference>
<dbReference type="InterPro" id="IPR020568">
    <property type="entry name" value="Ribosomal_Su5_D2-typ_SF"/>
</dbReference>
<dbReference type="InterPro" id="IPR004463">
    <property type="entry name" value="UDP-acyl_GlcNac_deAcase"/>
</dbReference>
<dbReference type="InterPro" id="IPR011334">
    <property type="entry name" value="UDP-acyl_GlcNac_deAcase_C"/>
</dbReference>
<dbReference type="InterPro" id="IPR015870">
    <property type="entry name" value="UDP-acyl_N-AcGlcN_deAcase_N"/>
</dbReference>
<dbReference type="NCBIfam" id="TIGR00325">
    <property type="entry name" value="lpxC"/>
    <property type="match status" value="1"/>
</dbReference>
<dbReference type="PANTHER" id="PTHR33694">
    <property type="entry name" value="UDP-3-O-ACYL-N-ACETYLGLUCOSAMINE DEACETYLASE 1, MITOCHONDRIAL-RELATED"/>
    <property type="match status" value="1"/>
</dbReference>
<dbReference type="PANTHER" id="PTHR33694:SF1">
    <property type="entry name" value="UDP-3-O-ACYL-N-ACETYLGLUCOSAMINE DEACETYLASE 1, MITOCHONDRIAL-RELATED"/>
    <property type="match status" value="1"/>
</dbReference>
<dbReference type="Pfam" id="PF03331">
    <property type="entry name" value="LpxC"/>
    <property type="match status" value="1"/>
</dbReference>
<dbReference type="SUPFAM" id="SSF54211">
    <property type="entry name" value="Ribosomal protein S5 domain 2-like"/>
    <property type="match status" value="2"/>
</dbReference>
<comment type="function">
    <text evidence="1">Catalyzes the hydrolysis of UDP-3-O-myristoyl-N-acetylglucosamine to form UDP-3-O-myristoylglucosamine and acetate, the committed step in lipid A biosynthesis.</text>
</comment>
<comment type="catalytic activity">
    <reaction evidence="1">
        <text>a UDP-3-O-[(3R)-3-hydroxyacyl]-N-acetyl-alpha-D-glucosamine + H2O = a UDP-3-O-[(3R)-3-hydroxyacyl]-alpha-D-glucosamine + acetate</text>
        <dbReference type="Rhea" id="RHEA:67816"/>
        <dbReference type="ChEBI" id="CHEBI:15377"/>
        <dbReference type="ChEBI" id="CHEBI:30089"/>
        <dbReference type="ChEBI" id="CHEBI:137740"/>
        <dbReference type="ChEBI" id="CHEBI:173225"/>
        <dbReference type="EC" id="3.5.1.108"/>
    </reaction>
</comment>
<comment type="cofactor">
    <cofactor evidence="1">
        <name>Zn(2+)</name>
        <dbReference type="ChEBI" id="CHEBI:29105"/>
    </cofactor>
</comment>
<comment type="pathway">
    <text evidence="1">Glycolipid biosynthesis; lipid IV(A) biosynthesis; lipid IV(A) from (3R)-3-hydroxytetradecanoyl-[acyl-carrier-protein] and UDP-N-acetyl-alpha-D-glucosamine: step 2/6.</text>
</comment>
<comment type="similarity">
    <text evidence="1">Belongs to the LpxC family.</text>
</comment>
<organism>
    <name type="scientific">Shewanella denitrificans (strain OS217 / ATCC BAA-1090 / DSM 15013)</name>
    <dbReference type="NCBI Taxonomy" id="318161"/>
    <lineage>
        <taxon>Bacteria</taxon>
        <taxon>Pseudomonadati</taxon>
        <taxon>Pseudomonadota</taxon>
        <taxon>Gammaproteobacteria</taxon>
        <taxon>Alteromonadales</taxon>
        <taxon>Shewanellaceae</taxon>
        <taxon>Shewanella</taxon>
    </lineage>
</organism>